<keyword id="KW-0408">Iron</keyword>
<keyword id="KW-0479">Metal-binding</keyword>
<keyword id="KW-1185">Reference proteome</keyword>
<accession>B4EZU6</accession>
<organism>
    <name type="scientific">Proteus mirabilis (strain HI4320)</name>
    <dbReference type="NCBI Taxonomy" id="529507"/>
    <lineage>
        <taxon>Bacteria</taxon>
        <taxon>Pseudomonadati</taxon>
        <taxon>Pseudomonadota</taxon>
        <taxon>Gammaproteobacteria</taxon>
        <taxon>Enterobacterales</taxon>
        <taxon>Morganellaceae</taxon>
        <taxon>Proteus</taxon>
    </lineage>
</organism>
<gene>
    <name evidence="1" type="primary">iscA</name>
    <name type="ordered locus">PMI1858</name>
</gene>
<reference key="1">
    <citation type="journal article" date="2008" name="J. Bacteriol.">
        <title>Complete genome sequence of uropathogenic Proteus mirabilis, a master of both adherence and motility.</title>
        <authorList>
            <person name="Pearson M.M."/>
            <person name="Sebaihia M."/>
            <person name="Churcher C."/>
            <person name="Quail M.A."/>
            <person name="Seshasayee A.S."/>
            <person name="Luscombe N.M."/>
            <person name="Abdellah Z."/>
            <person name="Arrosmith C."/>
            <person name="Atkin B."/>
            <person name="Chillingworth T."/>
            <person name="Hauser H."/>
            <person name="Jagels K."/>
            <person name="Moule S."/>
            <person name="Mungall K."/>
            <person name="Norbertczak H."/>
            <person name="Rabbinowitsch E."/>
            <person name="Walker D."/>
            <person name="Whithead S."/>
            <person name="Thomson N.R."/>
            <person name="Rather P.N."/>
            <person name="Parkhill J."/>
            <person name="Mobley H.L.T."/>
        </authorList>
    </citation>
    <scope>NUCLEOTIDE SEQUENCE [LARGE SCALE GENOMIC DNA]</scope>
    <source>
        <strain>HI4320</strain>
    </source>
</reference>
<evidence type="ECO:0000255" key="1">
    <source>
        <dbReference type="HAMAP-Rule" id="MF_01429"/>
    </source>
</evidence>
<comment type="function">
    <text evidence="1">Is able to transfer iron-sulfur clusters to apo-ferredoxin. Multiple cycles of [2Fe2S] cluster formation and transfer are observed, suggesting that IscA acts catalytically. Recruits intracellular free iron so as to provide iron for the assembly of transient iron-sulfur cluster in IscU in the presence of IscS, L-cysteine and the thioredoxin reductase system TrxA/TrxB.</text>
</comment>
<comment type="cofactor">
    <cofactor evidence="1">
        <name>Fe cation</name>
        <dbReference type="ChEBI" id="CHEBI:24875"/>
    </cofactor>
    <text evidence="1">Binds 2 iron ions per dimer. The dimer may bind additional iron ions.</text>
</comment>
<comment type="subunit">
    <text evidence="1">Homodimer; may form tetramers and higher multimers.</text>
</comment>
<comment type="similarity">
    <text evidence="1">Belongs to the HesB/IscA family.</text>
</comment>
<name>ISCA_PROMH</name>
<feature type="chain" id="PRO_1000145758" description="Iron-binding protein IscA">
    <location>
        <begin position="1"/>
        <end position="107"/>
    </location>
</feature>
<feature type="binding site" evidence="1">
    <location>
        <position position="35"/>
    </location>
    <ligand>
        <name>Fe cation</name>
        <dbReference type="ChEBI" id="CHEBI:24875"/>
    </ligand>
</feature>
<feature type="binding site" evidence="1">
    <location>
        <position position="99"/>
    </location>
    <ligand>
        <name>Fe cation</name>
        <dbReference type="ChEBI" id="CHEBI:24875"/>
    </ligand>
</feature>
<feature type="binding site" evidence="1">
    <location>
        <position position="101"/>
    </location>
    <ligand>
        <name>Fe cation</name>
        <dbReference type="ChEBI" id="CHEBI:24875"/>
    </ligand>
</feature>
<sequence>MSISLTEAAANRVRSFLANRGKGEGLRLGVRTSGCSGMAYVLEFADVINDEDTVFEDKGVKVIIDGKSMVYLDGTELDFVKEGLNEGFKFNNPNVANECGCGESFTV</sequence>
<dbReference type="EMBL" id="AM942759">
    <property type="protein sequence ID" value="CAR43851.1"/>
    <property type="molecule type" value="Genomic_DNA"/>
</dbReference>
<dbReference type="RefSeq" id="WP_004243846.1">
    <property type="nucleotide sequence ID" value="NC_010554.1"/>
</dbReference>
<dbReference type="SMR" id="B4EZU6"/>
<dbReference type="EnsemblBacteria" id="CAR43851">
    <property type="protein sequence ID" value="CAR43851"/>
    <property type="gene ID" value="PMI1858"/>
</dbReference>
<dbReference type="GeneID" id="6802534"/>
<dbReference type="KEGG" id="pmr:PMI1858"/>
<dbReference type="eggNOG" id="COG0316">
    <property type="taxonomic scope" value="Bacteria"/>
</dbReference>
<dbReference type="HOGENOM" id="CLU_069054_5_1_6"/>
<dbReference type="Proteomes" id="UP000008319">
    <property type="component" value="Chromosome"/>
</dbReference>
<dbReference type="GO" id="GO:0005829">
    <property type="term" value="C:cytosol"/>
    <property type="evidence" value="ECO:0007669"/>
    <property type="project" value="TreeGrafter"/>
</dbReference>
<dbReference type="GO" id="GO:0051537">
    <property type="term" value="F:2 iron, 2 sulfur cluster binding"/>
    <property type="evidence" value="ECO:0007669"/>
    <property type="project" value="UniProtKB-ARBA"/>
</dbReference>
<dbReference type="GO" id="GO:0005506">
    <property type="term" value="F:iron ion binding"/>
    <property type="evidence" value="ECO:0007669"/>
    <property type="project" value="UniProtKB-UniRule"/>
</dbReference>
<dbReference type="GO" id="GO:0016226">
    <property type="term" value="P:iron-sulfur cluster assembly"/>
    <property type="evidence" value="ECO:0007669"/>
    <property type="project" value="UniProtKB-UniRule"/>
</dbReference>
<dbReference type="FunFam" id="2.60.300.12:FF:000001">
    <property type="entry name" value="Iron-binding protein IscA"/>
    <property type="match status" value="1"/>
</dbReference>
<dbReference type="Gene3D" id="2.60.300.12">
    <property type="entry name" value="HesB-like domain"/>
    <property type="match status" value="1"/>
</dbReference>
<dbReference type="HAMAP" id="MF_01429">
    <property type="entry name" value="Fe_S_insert_IscA"/>
    <property type="match status" value="1"/>
</dbReference>
<dbReference type="InterPro" id="IPR050322">
    <property type="entry name" value="Fe-S_cluster_asmbl/transfer"/>
</dbReference>
<dbReference type="InterPro" id="IPR000361">
    <property type="entry name" value="FeS_biogenesis"/>
</dbReference>
<dbReference type="InterPro" id="IPR016092">
    <property type="entry name" value="FeS_cluster_insertion"/>
</dbReference>
<dbReference type="InterPro" id="IPR017870">
    <property type="entry name" value="FeS_cluster_insertion_CS"/>
</dbReference>
<dbReference type="InterPro" id="IPR035903">
    <property type="entry name" value="HesB-like_dom_sf"/>
</dbReference>
<dbReference type="InterPro" id="IPR011302">
    <property type="entry name" value="IscA_proteobacteria"/>
</dbReference>
<dbReference type="NCBIfam" id="TIGR00049">
    <property type="entry name" value="iron-sulfur cluster assembly accessory protein"/>
    <property type="match status" value="1"/>
</dbReference>
<dbReference type="NCBIfam" id="TIGR02011">
    <property type="entry name" value="IscA"/>
    <property type="match status" value="1"/>
</dbReference>
<dbReference type="NCBIfam" id="NF007049">
    <property type="entry name" value="PRK09502.1"/>
    <property type="match status" value="1"/>
</dbReference>
<dbReference type="PANTHER" id="PTHR10072:SF41">
    <property type="entry name" value="IRON-SULFUR CLUSTER ASSEMBLY 1 HOMOLOG, MITOCHONDRIAL"/>
    <property type="match status" value="1"/>
</dbReference>
<dbReference type="PANTHER" id="PTHR10072">
    <property type="entry name" value="IRON-SULFUR CLUSTER ASSEMBLY PROTEIN"/>
    <property type="match status" value="1"/>
</dbReference>
<dbReference type="Pfam" id="PF01521">
    <property type="entry name" value="Fe-S_biosyn"/>
    <property type="match status" value="1"/>
</dbReference>
<dbReference type="SUPFAM" id="SSF89360">
    <property type="entry name" value="HesB-like domain"/>
    <property type="match status" value="1"/>
</dbReference>
<dbReference type="PROSITE" id="PS01152">
    <property type="entry name" value="HESB"/>
    <property type="match status" value="1"/>
</dbReference>
<protein>
    <recommendedName>
        <fullName evidence="1">Iron-binding protein IscA</fullName>
    </recommendedName>
    <alternativeName>
        <fullName evidence="1">Iron-sulfur cluster assembly protein</fullName>
    </alternativeName>
</protein>
<proteinExistence type="inferred from homology"/>